<protein>
    <recommendedName>
        <fullName evidence="1">Large ribosomal subunit protein uL4</fullName>
    </recommendedName>
    <alternativeName>
        <fullName evidence="3">50S ribosomal protein L4</fullName>
    </alternativeName>
</protein>
<keyword id="KW-1185">Reference proteome</keyword>
<keyword id="KW-0687">Ribonucleoprotein</keyword>
<keyword id="KW-0689">Ribosomal protein</keyword>
<keyword id="KW-0694">RNA-binding</keyword>
<keyword id="KW-0699">rRNA-binding</keyword>
<evidence type="ECO:0000255" key="1">
    <source>
        <dbReference type="HAMAP-Rule" id="MF_01328"/>
    </source>
</evidence>
<evidence type="ECO:0000256" key="2">
    <source>
        <dbReference type="SAM" id="MobiDB-lite"/>
    </source>
</evidence>
<evidence type="ECO:0000305" key="3"/>
<dbReference type="EMBL" id="AE017263">
    <property type="protein sequence ID" value="AAT75480.1"/>
    <property type="molecule type" value="Genomic_DNA"/>
</dbReference>
<dbReference type="RefSeq" id="WP_011183021.1">
    <property type="nucleotide sequence ID" value="NC_006055.1"/>
</dbReference>
<dbReference type="RefSeq" id="YP_053364.1">
    <property type="nucleotide sequence ID" value="NC_006055.1"/>
</dbReference>
<dbReference type="SMR" id="Q6F1Z3"/>
<dbReference type="STRING" id="265311.Mfl124"/>
<dbReference type="PaxDb" id="265311-Mfl124"/>
<dbReference type="EnsemblBacteria" id="AAT75480">
    <property type="protein sequence ID" value="AAT75480"/>
    <property type="gene ID" value="Mfl124"/>
</dbReference>
<dbReference type="GeneID" id="2897865"/>
<dbReference type="KEGG" id="mfl:Mfl124"/>
<dbReference type="PATRIC" id="fig|265311.5.peg.125"/>
<dbReference type="eggNOG" id="COG0088">
    <property type="taxonomic scope" value="Bacteria"/>
</dbReference>
<dbReference type="HOGENOM" id="CLU_041575_5_2_14"/>
<dbReference type="OrthoDB" id="9803201at2"/>
<dbReference type="Proteomes" id="UP000006647">
    <property type="component" value="Chromosome"/>
</dbReference>
<dbReference type="GO" id="GO:1990904">
    <property type="term" value="C:ribonucleoprotein complex"/>
    <property type="evidence" value="ECO:0007669"/>
    <property type="project" value="UniProtKB-KW"/>
</dbReference>
<dbReference type="GO" id="GO:0005840">
    <property type="term" value="C:ribosome"/>
    <property type="evidence" value="ECO:0007669"/>
    <property type="project" value="UniProtKB-KW"/>
</dbReference>
<dbReference type="GO" id="GO:0019843">
    <property type="term" value="F:rRNA binding"/>
    <property type="evidence" value="ECO:0007669"/>
    <property type="project" value="UniProtKB-UniRule"/>
</dbReference>
<dbReference type="GO" id="GO:0003735">
    <property type="term" value="F:structural constituent of ribosome"/>
    <property type="evidence" value="ECO:0007669"/>
    <property type="project" value="InterPro"/>
</dbReference>
<dbReference type="GO" id="GO:0006412">
    <property type="term" value="P:translation"/>
    <property type="evidence" value="ECO:0007669"/>
    <property type="project" value="UniProtKB-UniRule"/>
</dbReference>
<dbReference type="Gene3D" id="3.40.1370.10">
    <property type="match status" value="1"/>
</dbReference>
<dbReference type="HAMAP" id="MF_01328_B">
    <property type="entry name" value="Ribosomal_uL4_B"/>
    <property type="match status" value="1"/>
</dbReference>
<dbReference type="InterPro" id="IPR002136">
    <property type="entry name" value="Ribosomal_uL4"/>
</dbReference>
<dbReference type="InterPro" id="IPR013005">
    <property type="entry name" value="Ribosomal_uL4-like"/>
</dbReference>
<dbReference type="InterPro" id="IPR023574">
    <property type="entry name" value="Ribosomal_uL4_dom_sf"/>
</dbReference>
<dbReference type="NCBIfam" id="TIGR03953">
    <property type="entry name" value="rplD_bact"/>
    <property type="match status" value="1"/>
</dbReference>
<dbReference type="PANTHER" id="PTHR10746">
    <property type="entry name" value="50S RIBOSOMAL PROTEIN L4"/>
    <property type="match status" value="1"/>
</dbReference>
<dbReference type="PANTHER" id="PTHR10746:SF6">
    <property type="entry name" value="LARGE RIBOSOMAL SUBUNIT PROTEIN UL4M"/>
    <property type="match status" value="1"/>
</dbReference>
<dbReference type="Pfam" id="PF00573">
    <property type="entry name" value="Ribosomal_L4"/>
    <property type="match status" value="1"/>
</dbReference>
<dbReference type="SUPFAM" id="SSF52166">
    <property type="entry name" value="Ribosomal protein L4"/>
    <property type="match status" value="1"/>
</dbReference>
<gene>
    <name evidence="1" type="primary">rplD</name>
    <name type="ordered locus">Mfl124</name>
</gene>
<comment type="function">
    <text evidence="1">One of the primary rRNA binding proteins, this protein initially binds near the 5'-end of the 23S rRNA. It is important during the early stages of 50S assembly. It makes multiple contacts with different domains of the 23S rRNA in the assembled 50S subunit and ribosome.</text>
</comment>
<comment type="function">
    <text evidence="1">Forms part of the polypeptide exit tunnel.</text>
</comment>
<comment type="subunit">
    <text evidence="1">Part of the 50S ribosomal subunit.</text>
</comment>
<comment type="similarity">
    <text evidence="1">Belongs to the universal ribosomal protein uL4 family.</text>
</comment>
<name>RL4_MESFL</name>
<proteinExistence type="inferred from homology"/>
<reference key="1">
    <citation type="submission" date="2004-06" db="EMBL/GenBank/DDBJ databases">
        <authorList>
            <person name="Birren B.W."/>
            <person name="Stange-Thomann N."/>
            <person name="Hafez N."/>
            <person name="DeCaprio D."/>
            <person name="Fisher S."/>
            <person name="Butler J."/>
            <person name="Elkins T."/>
            <person name="Kodira C.D."/>
            <person name="Major J."/>
            <person name="Wang S."/>
            <person name="Nicol R."/>
            <person name="Nusbaum C."/>
        </authorList>
    </citation>
    <scope>NUCLEOTIDE SEQUENCE [LARGE SCALE GENOMIC DNA]</scope>
    <source>
        <strain>ATCC 33453 / NBRC 100688 / NCTC 11704 / L1</strain>
    </source>
</reference>
<organism>
    <name type="scientific">Mesoplasma florum (strain ATCC 33453 / NBRC 100688 / NCTC 11704 / L1)</name>
    <name type="common">Acholeplasma florum</name>
    <dbReference type="NCBI Taxonomy" id="265311"/>
    <lineage>
        <taxon>Bacteria</taxon>
        <taxon>Bacillati</taxon>
        <taxon>Mycoplasmatota</taxon>
        <taxon>Mollicutes</taxon>
        <taxon>Entomoplasmatales</taxon>
        <taxon>Entomoplasmataceae</taxon>
        <taxon>Mesoplasma</taxon>
    </lineage>
</organism>
<sequence length="208" mass="22963">MELKVLNVQGQEVKTISLNDSVWNVAPHKQAIYDTVISQQAALRQGTKKTKTRAEVRGGGKKPWRQKGTGRARQGSIRAPHWRGGGVTFGPTPDINYKKSVNKKVRALAFKSALSIKASEQNLVIVDKFDFAKPSTKEMISVMKNLQIDDQKTLIITKENEELVIKSSSNIKGVKTLPSIKLNVFDILNATKLVMTEEAAMAVEGVYA</sequence>
<feature type="chain" id="PRO_0000242393" description="Large ribosomal subunit protein uL4">
    <location>
        <begin position="1"/>
        <end position="208"/>
    </location>
</feature>
<feature type="region of interest" description="Disordered" evidence="2">
    <location>
        <begin position="44"/>
        <end position="85"/>
    </location>
</feature>
<feature type="compositionally biased region" description="Basic residues" evidence="2">
    <location>
        <begin position="59"/>
        <end position="70"/>
    </location>
</feature>
<accession>Q6F1Z3</accession>